<accession>A5VN22</accession>
<sequence length="411" mass="45866">MSISFDLTIDDTRDQLARHARASLEAKPSLIGMSREEMAAALIAAGVPERQVKMRISQLWHWLYVRGVSDFADMRNISKDLRAMLAQHFTIARPEVVEEQISQDGTRKWLFRFPPRGAGRPVEIESVYIPEEGRGTLCISSQVGCTLTCSFCHTGTQKLVRNLTSEEILAQLLTARDRLGDFPDKDTPDGAMVPAEGRKITNIVMMGMGEPLYNFEEVKKALLIASDGDGLSLSKRRITLSTSGVVPEIYRTGDEIGVMLAISLHAVRDELRDILVPINKKYPLAELIKACREYPGLSNAKRITFEYVMLKDINDSLDDAKLLVKLLQGIPAKINLIPFNPWPGTNYQCSDWEQIEKFADYVNAAGYASPIRTPRGRDILAACGQLKSESERLRKSERLALEAMMIAGHGE</sequence>
<feature type="chain" id="PRO_0000350066" description="Dual-specificity RNA methyltransferase RlmN">
    <location>
        <begin position="1"/>
        <end position="411"/>
    </location>
</feature>
<feature type="domain" description="Radical SAM core" evidence="2">
    <location>
        <begin position="131"/>
        <end position="380"/>
    </location>
</feature>
<feature type="active site" description="Proton acceptor" evidence="1">
    <location>
        <position position="125"/>
    </location>
</feature>
<feature type="active site" description="S-methylcysteine intermediate" evidence="1">
    <location>
        <position position="383"/>
    </location>
</feature>
<feature type="binding site" evidence="1">
    <location>
        <position position="145"/>
    </location>
    <ligand>
        <name>[4Fe-4S] cluster</name>
        <dbReference type="ChEBI" id="CHEBI:49883"/>
        <note>4Fe-4S-S-AdoMet</note>
    </ligand>
</feature>
<feature type="binding site" evidence="1">
    <location>
        <position position="149"/>
    </location>
    <ligand>
        <name>[4Fe-4S] cluster</name>
        <dbReference type="ChEBI" id="CHEBI:49883"/>
        <note>4Fe-4S-S-AdoMet</note>
    </ligand>
</feature>
<feature type="binding site" evidence="1">
    <location>
        <position position="152"/>
    </location>
    <ligand>
        <name>[4Fe-4S] cluster</name>
        <dbReference type="ChEBI" id="CHEBI:49883"/>
        <note>4Fe-4S-S-AdoMet</note>
    </ligand>
</feature>
<feature type="binding site" evidence="1">
    <location>
        <begin position="209"/>
        <end position="210"/>
    </location>
    <ligand>
        <name>S-adenosyl-L-methionine</name>
        <dbReference type="ChEBI" id="CHEBI:59789"/>
    </ligand>
</feature>
<feature type="binding site" evidence="1">
    <location>
        <position position="241"/>
    </location>
    <ligand>
        <name>S-adenosyl-L-methionine</name>
        <dbReference type="ChEBI" id="CHEBI:59789"/>
    </ligand>
</feature>
<feature type="binding site" evidence="1">
    <location>
        <begin position="263"/>
        <end position="265"/>
    </location>
    <ligand>
        <name>S-adenosyl-L-methionine</name>
        <dbReference type="ChEBI" id="CHEBI:59789"/>
    </ligand>
</feature>
<feature type="binding site" evidence="1">
    <location>
        <position position="340"/>
    </location>
    <ligand>
        <name>S-adenosyl-L-methionine</name>
        <dbReference type="ChEBI" id="CHEBI:59789"/>
    </ligand>
</feature>
<feature type="disulfide bond" description="(transient)" evidence="1">
    <location>
        <begin position="138"/>
        <end position="383"/>
    </location>
</feature>
<organism>
    <name type="scientific">Brucella ovis (strain ATCC 25840 / 63/290 / NCTC 10512)</name>
    <dbReference type="NCBI Taxonomy" id="444178"/>
    <lineage>
        <taxon>Bacteria</taxon>
        <taxon>Pseudomonadati</taxon>
        <taxon>Pseudomonadota</taxon>
        <taxon>Alphaproteobacteria</taxon>
        <taxon>Hyphomicrobiales</taxon>
        <taxon>Brucellaceae</taxon>
        <taxon>Brucella/Ochrobactrum group</taxon>
        <taxon>Brucella</taxon>
    </lineage>
</organism>
<comment type="function">
    <text evidence="1">Specifically methylates position 2 of adenine 2503 in 23S rRNA and position 2 of adenine 37 in tRNAs. m2A2503 modification seems to play a crucial role in the proofreading step occurring at the peptidyl transferase center and thus would serve to optimize ribosomal fidelity.</text>
</comment>
<comment type="catalytic activity">
    <reaction evidence="1">
        <text>adenosine(2503) in 23S rRNA + 2 reduced [2Fe-2S]-[ferredoxin] + 2 S-adenosyl-L-methionine = 2-methyladenosine(2503) in 23S rRNA + 5'-deoxyadenosine + L-methionine + 2 oxidized [2Fe-2S]-[ferredoxin] + S-adenosyl-L-homocysteine</text>
        <dbReference type="Rhea" id="RHEA:42916"/>
        <dbReference type="Rhea" id="RHEA-COMP:10000"/>
        <dbReference type="Rhea" id="RHEA-COMP:10001"/>
        <dbReference type="Rhea" id="RHEA-COMP:10152"/>
        <dbReference type="Rhea" id="RHEA-COMP:10282"/>
        <dbReference type="ChEBI" id="CHEBI:17319"/>
        <dbReference type="ChEBI" id="CHEBI:33737"/>
        <dbReference type="ChEBI" id="CHEBI:33738"/>
        <dbReference type="ChEBI" id="CHEBI:57844"/>
        <dbReference type="ChEBI" id="CHEBI:57856"/>
        <dbReference type="ChEBI" id="CHEBI:59789"/>
        <dbReference type="ChEBI" id="CHEBI:74411"/>
        <dbReference type="ChEBI" id="CHEBI:74497"/>
        <dbReference type="EC" id="2.1.1.192"/>
    </reaction>
</comment>
<comment type="catalytic activity">
    <reaction evidence="1">
        <text>adenosine(37) in tRNA + 2 reduced [2Fe-2S]-[ferredoxin] + 2 S-adenosyl-L-methionine = 2-methyladenosine(37) in tRNA + 5'-deoxyadenosine + L-methionine + 2 oxidized [2Fe-2S]-[ferredoxin] + S-adenosyl-L-homocysteine</text>
        <dbReference type="Rhea" id="RHEA:43332"/>
        <dbReference type="Rhea" id="RHEA-COMP:10000"/>
        <dbReference type="Rhea" id="RHEA-COMP:10001"/>
        <dbReference type="Rhea" id="RHEA-COMP:10162"/>
        <dbReference type="Rhea" id="RHEA-COMP:10485"/>
        <dbReference type="ChEBI" id="CHEBI:17319"/>
        <dbReference type="ChEBI" id="CHEBI:33737"/>
        <dbReference type="ChEBI" id="CHEBI:33738"/>
        <dbReference type="ChEBI" id="CHEBI:57844"/>
        <dbReference type="ChEBI" id="CHEBI:57856"/>
        <dbReference type="ChEBI" id="CHEBI:59789"/>
        <dbReference type="ChEBI" id="CHEBI:74411"/>
        <dbReference type="ChEBI" id="CHEBI:74497"/>
        <dbReference type="EC" id="2.1.1.192"/>
    </reaction>
</comment>
<comment type="cofactor">
    <cofactor evidence="1">
        <name>[4Fe-4S] cluster</name>
        <dbReference type="ChEBI" id="CHEBI:49883"/>
    </cofactor>
    <text evidence="1">Binds 1 [4Fe-4S] cluster. The cluster is coordinated with 3 cysteines and an exchangeable S-adenosyl-L-methionine.</text>
</comment>
<comment type="subcellular location">
    <subcellularLocation>
        <location evidence="1">Cytoplasm</location>
    </subcellularLocation>
</comment>
<comment type="miscellaneous">
    <text evidence="1">Reaction proceeds by a ping-pong mechanism involving intermediate methylation of a conserved cysteine residue.</text>
</comment>
<comment type="similarity">
    <text evidence="1">Belongs to the radical SAM superfamily. RlmN family.</text>
</comment>
<gene>
    <name evidence="1" type="primary">rlmN</name>
    <name type="ordered locus">BOV_0076</name>
</gene>
<name>RLMN_BRUO2</name>
<protein>
    <recommendedName>
        <fullName evidence="1">Dual-specificity RNA methyltransferase RlmN</fullName>
        <ecNumber evidence="1">2.1.1.192</ecNumber>
    </recommendedName>
    <alternativeName>
        <fullName evidence="1">23S rRNA (adenine(2503)-C(2))-methyltransferase</fullName>
    </alternativeName>
    <alternativeName>
        <fullName evidence="1">23S rRNA m2A2503 methyltransferase</fullName>
    </alternativeName>
    <alternativeName>
        <fullName evidence="1">Ribosomal RNA large subunit methyltransferase N</fullName>
    </alternativeName>
    <alternativeName>
        <fullName evidence="1">tRNA (adenine(37)-C(2))-methyltransferase</fullName>
    </alternativeName>
    <alternativeName>
        <fullName evidence="1">tRNA m2A37 methyltransferase</fullName>
    </alternativeName>
</protein>
<keyword id="KW-0004">4Fe-4S</keyword>
<keyword id="KW-0963">Cytoplasm</keyword>
<keyword id="KW-1015">Disulfide bond</keyword>
<keyword id="KW-0408">Iron</keyword>
<keyword id="KW-0411">Iron-sulfur</keyword>
<keyword id="KW-0479">Metal-binding</keyword>
<keyword id="KW-0489">Methyltransferase</keyword>
<keyword id="KW-0698">rRNA processing</keyword>
<keyword id="KW-0949">S-adenosyl-L-methionine</keyword>
<keyword id="KW-0808">Transferase</keyword>
<keyword id="KW-0819">tRNA processing</keyword>
<evidence type="ECO:0000255" key="1">
    <source>
        <dbReference type="HAMAP-Rule" id="MF_01849"/>
    </source>
</evidence>
<evidence type="ECO:0000255" key="2">
    <source>
        <dbReference type="PROSITE-ProRule" id="PRU01266"/>
    </source>
</evidence>
<reference key="1">
    <citation type="journal article" date="2009" name="PLoS ONE">
        <title>Genome degradation in Brucella ovis corresponds with narrowing of its host range and tissue tropism.</title>
        <authorList>
            <person name="Tsolis R.M."/>
            <person name="Seshadri R."/>
            <person name="Santos R.L."/>
            <person name="Sangari F.J."/>
            <person name="Lobo J.M."/>
            <person name="de Jong M.F."/>
            <person name="Ren Q."/>
            <person name="Myers G."/>
            <person name="Brinkac L.M."/>
            <person name="Nelson W.C."/>
            <person name="Deboy R.T."/>
            <person name="Angiuoli S."/>
            <person name="Khouri H."/>
            <person name="Dimitrov G."/>
            <person name="Robinson J.R."/>
            <person name="Mulligan S."/>
            <person name="Walker R.L."/>
            <person name="Elzer P.E."/>
            <person name="Hassan K.A."/>
            <person name="Paulsen I.T."/>
        </authorList>
    </citation>
    <scope>NUCLEOTIDE SEQUENCE [LARGE SCALE GENOMIC DNA]</scope>
    <source>
        <strain>ATCC 25840 / 63/290 / NCTC 10512</strain>
    </source>
</reference>
<dbReference type="EC" id="2.1.1.192" evidence="1"/>
<dbReference type="EMBL" id="CP000708">
    <property type="protein sequence ID" value="ABQ60566.1"/>
    <property type="molecule type" value="Genomic_DNA"/>
</dbReference>
<dbReference type="RefSeq" id="WP_002968086.1">
    <property type="nucleotide sequence ID" value="NC_009505.1"/>
</dbReference>
<dbReference type="SMR" id="A5VN22"/>
<dbReference type="GeneID" id="97534497"/>
<dbReference type="KEGG" id="bov:BOV_0076"/>
<dbReference type="HOGENOM" id="CLU_029101_2_0_5"/>
<dbReference type="PhylomeDB" id="A5VN22"/>
<dbReference type="Proteomes" id="UP000006383">
    <property type="component" value="Chromosome I"/>
</dbReference>
<dbReference type="GO" id="GO:0005737">
    <property type="term" value="C:cytoplasm"/>
    <property type="evidence" value="ECO:0007669"/>
    <property type="project" value="UniProtKB-SubCell"/>
</dbReference>
<dbReference type="GO" id="GO:0051539">
    <property type="term" value="F:4 iron, 4 sulfur cluster binding"/>
    <property type="evidence" value="ECO:0007669"/>
    <property type="project" value="UniProtKB-UniRule"/>
</dbReference>
<dbReference type="GO" id="GO:0046872">
    <property type="term" value="F:metal ion binding"/>
    <property type="evidence" value="ECO:0007669"/>
    <property type="project" value="UniProtKB-KW"/>
</dbReference>
<dbReference type="GO" id="GO:0070040">
    <property type="term" value="F:rRNA (adenine(2503)-C2-)-methyltransferase activity"/>
    <property type="evidence" value="ECO:0007669"/>
    <property type="project" value="UniProtKB-UniRule"/>
</dbReference>
<dbReference type="GO" id="GO:0019843">
    <property type="term" value="F:rRNA binding"/>
    <property type="evidence" value="ECO:0007669"/>
    <property type="project" value="UniProtKB-UniRule"/>
</dbReference>
<dbReference type="GO" id="GO:0002935">
    <property type="term" value="F:tRNA (adenine(37)-C2)-methyltransferase activity"/>
    <property type="evidence" value="ECO:0007669"/>
    <property type="project" value="UniProtKB-UniRule"/>
</dbReference>
<dbReference type="GO" id="GO:0000049">
    <property type="term" value="F:tRNA binding"/>
    <property type="evidence" value="ECO:0007669"/>
    <property type="project" value="UniProtKB-UniRule"/>
</dbReference>
<dbReference type="GO" id="GO:0070475">
    <property type="term" value="P:rRNA base methylation"/>
    <property type="evidence" value="ECO:0007669"/>
    <property type="project" value="UniProtKB-UniRule"/>
</dbReference>
<dbReference type="GO" id="GO:0030488">
    <property type="term" value="P:tRNA methylation"/>
    <property type="evidence" value="ECO:0007669"/>
    <property type="project" value="UniProtKB-UniRule"/>
</dbReference>
<dbReference type="CDD" id="cd01335">
    <property type="entry name" value="Radical_SAM"/>
    <property type="match status" value="1"/>
</dbReference>
<dbReference type="FunFam" id="3.20.20.70:FF:000008">
    <property type="entry name" value="Dual-specificity RNA methyltransferase RlmN"/>
    <property type="match status" value="1"/>
</dbReference>
<dbReference type="Gene3D" id="1.10.150.530">
    <property type="match status" value="1"/>
</dbReference>
<dbReference type="Gene3D" id="3.20.20.70">
    <property type="entry name" value="Aldolase class I"/>
    <property type="match status" value="1"/>
</dbReference>
<dbReference type="HAMAP" id="MF_01849">
    <property type="entry name" value="RNA_methyltr_RlmN"/>
    <property type="match status" value="1"/>
</dbReference>
<dbReference type="InterPro" id="IPR013785">
    <property type="entry name" value="Aldolase_TIM"/>
</dbReference>
<dbReference type="InterPro" id="IPR040072">
    <property type="entry name" value="Methyltransferase_A"/>
</dbReference>
<dbReference type="InterPro" id="IPR048641">
    <property type="entry name" value="RlmN_N"/>
</dbReference>
<dbReference type="InterPro" id="IPR027492">
    <property type="entry name" value="RNA_MTrfase_RlmN"/>
</dbReference>
<dbReference type="InterPro" id="IPR004383">
    <property type="entry name" value="rRNA_lsu_MTrfase_RlmN/Cfr"/>
</dbReference>
<dbReference type="InterPro" id="IPR007197">
    <property type="entry name" value="rSAM"/>
</dbReference>
<dbReference type="NCBIfam" id="TIGR00048">
    <property type="entry name" value="rRNA_mod_RlmN"/>
    <property type="match status" value="1"/>
</dbReference>
<dbReference type="PANTHER" id="PTHR30544">
    <property type="entry name" value="23S RRNA METHYLTRANSFERASE"/>
    <property type="match status" value="1"/>
</dbReference>
<dbReference type="PANTHER" id="PTHR30544:SF5">
    <property type="entry name" value="RADICAL SAM CORE DOMAIN-CONTAINING PROTEIN"/>
    <property type="match status" value="1"/>
</dbReference>
<dbReference type="Pfam" id="PF04055">
    <property type="entry name" value="Radical_SAM"/>
    <property type="match status" value="1"/>
</dbReference>
<dbReference type="Pfam" id="PF21016">
    <property type="entry name" value="RlmN_N"/>
    <property type="match status" value="1"/>
</dbReference>
<dbReference type="PIRSF" id="PIRSF006004">
    <property type="entry name" value="CHP00048"/>
    <property type="match status" value="1"/>
</dbReference>
<dbReference type="SFLD" id="SFLDF00275">
    <property type="entry name" value="adenosine_C2_methyltransferase"/>
    <property type="match status" value="1"/>
</dbReference>
<dbReference type="SFLD" id="SFLDG01062">
    <property type="entry name" value="methyltransferase_(Class_A)"/>
    <property type="match status" value="1"/>
</dbReference>
<dbReference type="SUPFAM" id="SSF102114">
    <property type="entry name" value="Radical SAM enzymes"/>
    <property type="match status" value="1"/>
</dbReference>
<dbReference type="PROSITE" id="PS51918">
    <property type="entry name" value="RADICAL_SAM"/>
    <property type="match status" value="1"/>
</dbReference>
<proteinExistence type="inferred from homology"/>